<keyword id="KW-0066">ATP synthesis</keyword>
<keyword id="KW-0997">Cell inner membrane</keyword>
<keyword id="KW-1003">Cell membrane</keyword>
<keyword id="KW-0139">CF(1)</keyword>
<keyword id="KW-0375">Hydrogen ion transport</keyword>
<keyword id="KW-0406">Ion transport</keyword>
<keyword id="KW-0472">Membrane</keyword>
<keyword id="KW-0813">Transport</keyword>
<proteinExistence type="inferred from homology"/>
<reference key="1">
    <citation type="submission" date="2007-02" db="EMBL/GenBank/DDBJ databases">
        <title>Complete sequence of chromosome 1 of Rhodobacter sphaeroides ATCC 17029.</title>
        <authorList>
            <person name="Copeland A."/>
            <person name="Lucas S."/>
            <person name="Lapidus A."/>
            <person name="Barry K."/>
            <person name="Detter J.C."/>
            <person name="Glavina del Rio T."/>
            <person name="Hammon N."/>
            <person name="Israni S."/>
            <person name="Dalin E."/>
            <person name="Tice H."/>
            <person name="Pitluck S."/>
            <person name="Kiss H."/>
            <person name="Brettin T."/>
            <person name="Bruce D."/>
            <person name="Han C."/>
            <person name="Tapia R."/>
            <person name="Gilna P."/>
            <person name="Schmutz J."/>
            <person name="Larimer F."/>
            <person name="Land M."/>
            <person name="Hauser L."/>
            <person name="Kyrpides N."/>
            <person name="Mikhailova N."/>
            <person name="Richardson P."/>
            <person name="Mackenzie C."/>
            <person name="Choudhary M."/>
            <person name="Donohue T.J."/>
            <person name="Kaplan S."/>
        </authorList>
    </citation>
    <scope>NUCLEOTIDE SEQUENCE [LARGE SCALE GENOMIC DNA]</scope>
    <source>
        <strain>ATCC 17029 / ATH 2.4.9</strain>
    </source>
</reference>
<gene>
    <name evidence="1" type="primary">atpH</name>
    <name type="ordered locus">Rsph17029_0971</name>
</gene>
<name>ATPD_CERS1</name>
<sequence>MSEPASISSGIAARYAAAVFELAKDEGALPALEKDMDALGAAWSESADLRDLATSPVYAREEQQKAIAAVAAKMGLSTVTANTLALMGSKRRLFVLPQMVADVQNRIATEKGEITAEVTAAAPLSPEQAARLAATLKARAGKDVKLKTTVDESLIGGLVVKLGSSMIDTSVKARLAALQNAMKEVG</sequence>
<accession>A3PIB6</accession>
<feature type="chain" id="PRO_0000371096" description="ATP synthase subunit delta">
    <location>
        <begin position="1"/>
        <end position="186"/>
    </location>
</feature>
<dbReference type="EMBL" id="CP000577">
    <property type="protein sequence ID" value="ABN76082.1"/>
    <property type="molecule type" value="Genomic_DNA"/>
</dbReference>
<dbReference type="RefSeq" id="WP_002719459.1">
    <property type="nucleotide sequence ID" value="NC_009049.1"/>
</dbReference>
<dbReference type="SMR" id="A3PIB6"/>
<dbReference type="KEGG" id="rsh:Rsph17029_0971"/>
<dbReference type="HOGENOM" id="CLU_085114_0_1_5"/>
<dbReference type="GO" id="GO:0005886">
    <property type="term" value="C:plasma membrane"/>
    <property type="evidence" value="ECO:0007669"/>
    <property type="project" value="UniProtKB-SubCell"/>
</dbReference>
<dbReference type="GO" id="GO:0045259">
    <property type="term" value="C:proton-transporting ATP synthase complex"/>
    <property type="evidence" value="ECO:0007669"/>
    <property type="project" value="UniProtKB-KW"/>
</dbReference>
<dbReference type="GO" id="GO:0046933">
    <property type="term" value="F:proton-transporting ATP synthase activity, rotational mechanism"/>
    <property type="evidence" value="ECO:0007669"/>
    <property type="project" value="UniProtKB-UniRule"/>
</dbReference>
<dbReference type="Gene3D" id="1.10.520.20">
    <property type="entry name" value="N-terminal domain of the delta subunit of the F1F0-ATP synthase"/>
    <property type="match status" value="1"/>
</dbReference>
<dbReference type="HAMAP" id="MF_01416">
    <property type="entry name" value="ATP_synth_delta_bact"/>
    <property type="match status" value="1"/>
</dbReference>
<dbReference type="InterPro" id="IPR026015">
    <property type="entry name" value="ATP_synth_OSCP/delta_N_sf"/>
</dbReference>
<dbReference type="InterPro" id="IPR020781">
    <property type="entry name" value="ATPase_OSCP/d_CS"/>
</dbReference>
<dbReference type="InterPro" id="IPR000711">
    <property type="entry name" value="ATPase_OSCP/dsu"/>
</dbReference>
<dbReference type="NCBIfam" id="TIGR01145">
    <property type="entry name" value="ATP_synt_delta"/>
    <property type="match status" value="1"/>
</dbReference>
<dbReference type="NCBIfam" id="NF004406">
    <property type="entry name" value="PRK05758.3-2"/>
    <property type="match status" value="1"/>
</dbReference>
<dbReference type="PANTHER" id="PTHR11910">
    <property type="entry name" value="ATP SYNTHASE DELTA CHAIN"/>
    <property type="match status" value="1"/>
</dbReference>
<dbReference type="Pfam" id="PF00213">
    <property type="entry name" value="OSCP"/>
    <property type="match status" value="1"/>
</dbReference>
<dbReference type="PRINTS" id="PR00125">
    <property type="entry name" value="ATPASEDELTA"/>
</dbReference>
<dbReference type="SUPFAM" id="SSF47928">
    <property type="entry name" value="N-terminal domain of the delta subunit of the F1F0-ATP synthase"/>
    <property type="match status" value="1"/>
</dbReference>
<dbReference type="PROSITE" id="PS00389">
    <property type="entry name" value="ATPASE_DELTA"/>
    <property type="match status" value="1"/>
</dbReference>
<evidence type="ECO:0000255" key="1">
    <source>
        <dbReference type="HAMAP-Rule" id="MF_01416"/>
    </source>
</evidence>
<organism>
    <name type="scientific">Cereibacter sphaeroides (strain ATCC 17029 / ATH 2.4.9)</name>
    <name type="common">Rhodobacter sphaeroides</name>
    <dbReference type="NCBI Taxonomy" id="349101"/>
    <lineage>
        <taxon>Bacteria</taxon>
        <taxon>Pseudomonadati</taxon>
        <taxon>Pseudomonadota</taxon>
        <taxon>Alphaproteobacteria</taxon>
        <taxon>Rhodobacterales</taxon>
        <taxon>Paracoccaceae</taxon>
        <taxon>Cereibacter</taxon>
    </lineage>
</organism>
<protein>
    <recommendedName>
        <fullName evidence="1">ATP synthase subunit delta</fullName>
    </recommendedName>
    <alternativeName>
        <fullName evidence="1">ATP synthase F(1) sector subunit delta</fullName>
    </alternativeName>
    <alternativeName>
        <fullName evidence="1">F-type ATPase subunit delta</fullName>
        <shortName evidence="1">F-ATPase subunit delta</shortName>
    </alternativeName>
</protein>
<comment type="function">
    <text evidence="1">F(1)F(0) ATP synthase produces ATP from ADP in the presence of a proton or sodium gradient. F-type ATPases consist of two structural domains, F(1) containing the extramembraneous catalytic core and F(0) containing the membrane proton channel, linked together by a central stalk and a peripheral stalk. During catalysis, ATP synthesis in the catalytic domain of F(1) is coupled via a rotary mechanism of the central stalk subunits to proton translocation.</text>
</comment>
<comment type="function">
    <text evidence="1">This protein is part of the stalk that links CF(0) to CF(1). It either transmits conformational changes from CF(0) to CF(1) or is implicated in proton conduction.</text>
</comment>
<comment type="subunit">
    <text evidence="1">F-type ATPases have 2 components, F(1) - the catalytic core - and F(0) - the membrane proton channel. F(1) has five subunits: alpha(3), beta(3), gamma(1), delta(1), epsilon(1). CF(0) has four main subunits: a(1), b(1), b'(1) and c(10-14). The alpha and beta chains form an alternating ring which encloses part of the gamma chain. F(1) is attached to F(0) by a central stalk formed by the gamma and epsilon chains, while a peripheral stalk is formed by the delta, b and b' chains.</text>
</comment>
<comment type="subcellular location">
    <subcellularLocation>
        <location evidence="1">Cell inner membrane</location>
        <topology evidence="1">Peripheral membrane protein</topology>
    </subcellularLocation>
</comment>
<comment type="similarity">
    <text evidence="1">Belongs to the ATPase delta chain family.</text>
</comment>